<comment type="function">
    <text evidence="1">Catalyzes the methylthiolation of an aspartic acid residue of ribosomal protein uS12.</text>
</comment>
<comment type="catalytic activity">
    <reaction evidence="1">
        <text>L-aspartate(89)-[ribosomal protein uS12]-hydrogen + (sulfur carrier)-SH + AH2 + 2 S-adenosyl-L-methionine = 3-methylsulfanyl-L-aspartate(89)-[ribosomal protein uS12]-hydrogen + (sulfur carrier)-H + 5'-deoxyadenosine + L-methionine + A + S-adenosyl-L-homocysteine + 2 H(+)</text>
        <dbReference type="Rhea" id="RHEA:37087"/>
        <dbReference type="Rhea" id="RHEA-COMP:10460"/>
        <dbReference type="Rhea" id="RHEA-COMP:10461"/>
        <dbReference type="Rhea" id="RHEA-COMP:14737"/>
        <dbReference type="Rhea" id="RHEA-COMP:14739"/>
        <dbReference type="ChEBI" id="CHEBI:13193"/>
        <dbReference type="ChEBI" id="CHEBI:15378"/>
        <dbReference type="ChEBI" id="CHEBI:17319"/>
        <dbReference type="ChEBI" id="CHEBI:17499"/>
        <dbReference type="ChEBI" id="CHEBI:29917"/>
        <dbReference type="ChEBI" id="CHEBI:29961"/>
        <dbReference type="ChEBI" id="CHEBI:57844"/>
        <dbReference type="ChEBI" id="CHEBI:57856"/>
        <dbReference type="ChEBI" id="CHEBI:59789"/>
        <dbReference type="ChEBI" id="CHEBI:64428"/>
        <dbReference type="ChEBI" id="CHEBI:73599"/>
        <dbReference type="EC" id="2.8.4.4"/>
    </reaction>
</comment>
<comment type="cofactor">
    <cofactor evidence="1">
        <name>[4Fe-4S] cluster</name>
        <dbReference type="ChEBI" id="CHEBI:49883"/>
    </cofactor>
    <text evidence="1">Binds 2 [4Fe-4S] clusters. One cluster is coordinated with 3 cysteines and an exchangeable S-adenosyl-L-methionine.</text>
</comment>
<comment type="subcellular location">
    <subcellularLocation>
        <location evidence="1">Cytoplasm</location>
    </subcellularLocation>
</comment>
<comment type="similarity">
    <text evidence="1">Belongs to the methylthiotransferase family. RimO subfamily.</text>
</comment>
<organism>
    <name type="scientific">Salmonella schwarzengrund (strain CVM19633)</name>
    <dbReference type="NCBI Taxonomy" id="439843"/>
    <lineage>
        <taxon>Bacteria</taxon>
        <taxon>Pseudomonadati</taxon>
        <taxon>Pseudomonadota</taxon>
        <taxon>Gammaproteobacteria</taxon>
        <taxon>Enterobacterales</taxon>
        <taxon>Enterobacteriaceae</taxon>
        <taxon>Salmonella</taxon>
    </lineage>
</organism>
<name>RIMO_SALSV</name>
<proteinExistence type="inferred from homology"/>
<accession>B4TQZ6</accession>
<dbReference type="EC" id="2.8.4.4" evidence="1"/>
<dbReference type="EMBL" id="CP001127">
    <property type="protein sequence ID" value="ACF88790.1"/>
    <property type="molecule type" value="Genomic_DNA"/>
</dbReference>
<dbReference type="RefSeq" id="WP_000073317.1">
    <property type="nucleotide sequence ID" value="NC_011094.1"/>
</dbReference>
<dbReference type="SMR" id="B4TQZ6"/>
<dbReference type="KEGG" id="sew:SeSA_A1003"/>
<dbReference type="HOGENOM" id="CLU_018697_0_0_6"/>
<dbReference type="Proteomes" id="UP000001865">
    <property type="component" value="Chromosome"/>
</dbReference>
<dbReference type="GO" id="GO:0005829">
    <property type="term" value="C:cytosol"/>
    <property type="evidence" value="ECO:0007669"/>
    <property type="project" value="TreeGrafter"/>
</dbReference>
<dbReference type="GO" id="GO:0051539">
    <property type="term" value="F:4 iron, 4 sulfur cluster binding"/>
    <property type="evidence" value="ECO:0007669"/>
    <property type="project" value="UniProtKB-UniRule"/>
</dbReference>
<dbReference type="GO" id="GO:0035599">
    <property type="term" value="F:aspartic acid methylthiotransferase activity"/>
    <property type="evidence" value="ECO:0007669"/>
    <property type="project" value="TreeGrafter"/>
</dbReference>
<dbReference type="GO" id="GO:0046872">
    <property type="term" value="F:metal ion binding"/>
    <property type="evidence" value="ECO:0007669"/>
    <property type="project" value="UniProtKB-KW"/>
</dbReference>
<dbReference type="GO" id="GO:0103039">
    <property type="term" value="F:protein methylthiotransferase activity"/>
    <property type="evidence" value="ECO:0007669"/>
    <property type="project" value="UniProtKB-EC"/>
</dbReference>
<dbReference type="GO" id="GO:0006400">
    <property type="term" value="P:tRNA modification"/>
    <property type="evidence" value="ECO:0007669"/>
    <property type="project" value="InterPro"/>
</dbReference>
<dbReference type="CDD" id="cd01335">
    <property type="entry name" value="Radical_SAM"/>
    <property type="match status" value="1"/>
</dbReference>
<dbReference type="FunFam" id="2.40.50.140:FF:000060">
    <property type="entry name" value="Ribosomal protein S12 methylthiotransferase RimO"/>
    <property type="match status" value="1"/>
</dbReference>
<dbReference type="FunFam" id="3.40.50.12160:FF:000002">
    <property type="entry name" value="Ribosomal protein S12 methylthiotransferase RimO"/>
    <property type="match status" value="1"/>
</dbReference>
<dbReference type="FunFam" id="3.80.30.20:FF:000001">
    <property type="entry name" value="tRNA-2-methylthio-N(6)-dimethylallyladenosine synthase 2"/>
    <property type="match status" value="1"/>
</dbReference>
<dbReference type="Gene3D" id="3.40.50.12160">
    <property type="entry name" value="Methylthiotransferase, N-terminal domain"/>
    <property type="match status" value="1"/>
</dbReference>
<dbReference type="Gene3D" id="2.40.50.140">
    <property type="entry name" value="Nucleic acid-binding proteins"/>
    <property type="match status" value="1"/>
</dbReference>
<dbReference type="Gene3D" id="3.80.30.20">
    <property type="entry name" value="tm_1862 like domain"/>
    <property type="match status" value="1"/>
</dbReference>
<dbReference type="HAMAP" id="MF_01865">
    <property type="entry name" value="MTTase_RimO"/>
    <property type="match status" value="1"/>
</dbReference>
<dbReference type="InterPro" id="IPR006638">
    <property type="entry name" value="Elp3/MiaA/NifB-like_rSAM"/>
</dbReference>
<dbReference type="InterPro" id="IPR005839">
    <property type="entry name" value="Methylthiotransferase"/>
</dbReference>
<dbReference type="InterPro" id="IPR020612">
    <property type="entry name" value="Methylthiotransferase_CS"/>
</dbReference>
<dbReference type="InterPro" id="IPR013848">
    <property type="entry name" value="Methylthiotransferase_N"/>
</dbReference>
<dbReference type="InterPro" id="IPR038135">
    <property type="entry name" value="Methylthiotransferase_N_sf"/>
</dbReference>
<dbReference type="InterPro" id="IPR012340">
    <property type="entry name" value="NA-bd_OB-fold"/>
</dbReference>
<dbReference type="InterPro" id="IPR005840">
    <property type="entry name" value="Ribosomal_uS12_MeSTrfase_RimO"/>
</dbReference>
<dbReference type="InterPro" id="IPR007197">
    <property type="entry name" value="rSAM"/>
</dbReference>
<dbReference type="InterPro" id="IPR023404">
    <property type="entry name" value="rSAM_horseshoe"/>
</dbReference>
<dbReference type="InterPro" id="IPR002792">
    <property type="entry name" value="TRAM_dom"/>
</dbReference>
<dbReference type="NCBIfam" id="TIGR01125">
    <property type="entry name" value="30S ribosomal protein S12 methylthiotransferase RimO"/>
    <property type="match status" value="1"/>
</dbReference>
<dbReference type="NCBIfam" id="TIGR00089">
    <property type="entry name" value="MiaB/RimO family radical SAM methylthiotransferase"/>
    <property type="match status" value="1"/>
</dbReference>
<dbReference type="PANTHER" id="PTHR43837">
    <property type="entry name" value="RIBOSOMAL PROTEIN S12 METHYLTHIOTRANSFERASE RIMO"/>
    <property type="match status" value="1"/>
</dbReference>
<dbReference type="PANTHER" id="PTHR43837:SF1">
    <property type="entry name" value="RIBOSOMAL PROTEIN US12 METHYLTHIOTRANSFERASE RIMO"/>
    <property type="match status" value="1"/>
</dbReference>
<dbReference type="Pfam" id="PF04055">
    <property type="entry name" value="Radical_SAM"/>
    <property type="match status" value="1"/>
</dbReference>
<dbReference type="Pfam" id="PF18693">
    <property type="entry name" value="TRAM_2"/>
    <property type="match status" value="1"/>
</dbReference>
<dbReference type="Pfam" id="PF00919">
    <property type="entry name" value="UPF0004"/>
    <property type="match status" value="1"/>
</dbReference>
<dbReference type="SFLD" id="SFLDG01082">
    <property type="entry name" value="B12-binding_domain_containing"/>
    <property type="match status" value="1"/>
</dbReference>
<dbReference type="SFLD" id="SFLDG01061">
    <property type="entry name" value="methylthiotransferase"/>
    <property type="match status" value="1"/>
</dbReference>
<dbReference type="SFLD" id="SFLDF00274">
    <property type="entry name" value="ribosomal_protein_S12_methylth"/>
    <property type="match status" value="1"/>
</dbReference>
<dbReference type="SMART" id="SM00729">
    <property type="entry name" value="Elp3"/>
    <property type="match status" value="1"/>
</dbReference>
<dbReference type="SUPFAM" id="SSF102114">
    <property type="entry name" value="Radical SAM enzymes"/>
    <property type="match status" value="1"/>
</dbReference>
<dbReference type="PROSITE" id="PS51449">
    <property type="entry name" value="MTTASE_N"/>
    <property type="match status" value="1"/>
</dbReference>
<dbReference type="PROSITE" id="PS01278">
    <property type="entry name" value="MTTASE_RADICAL"/>
    <property type="match status" value="1"/>
</dbReference>
<dbReference type="PROSITE" id="PS51918">
    <property type="entry name" value="RADICAL_SAM"/>
    <property type="match status" value="1"/>
</dbReference>
<dbReference type="PROSITE" id="PS50926">
    <property type="entry name" value="TRAM"/>
    <property type="match status" value="1"/>
</dbReference>
<gene>
    <name evidence="1" type="primary">rimO</name>
    <name type="ordered locus">SeSA_A1003</name>
</gene>
<feature type="chain" id="PRO_0000374996" description="Ribosomal protein uS12 methylthiotransferase RimO">
    <location>
        <begin position="1"/>
        <end position="441"/>
    </location>
</feature>
<feature type="domain" description="MTTase N-terminal" evidence="1">
    <location>
        <begin position="8"/>
        <end position="118"/>
    </location>
</feature>
<feature type="domain" description="Radical SAM core" evidence="2">
    <location>
        <begin position="136"/>
        <end position="373"/>
    </location>
</feature>
<feature type="domain" description="TRAM" evidence="1">
    <location>
        <begin position="376"/>
        <end position="441"/>
    </location>
</feature>
<feature type="binding site" evidence="1">
    <location>
        <position position="17"/>
    </location>
    <ligand>
        <name>[4Fe-4S] cluster</name>
        <dbReference type="ChEBI" id="CHEBI:49883"/>
        <label>1</label>
    </ligand>
</feature>
<feature type="binding site" evidence="1">
    <location>
        <position position="53"/>
    </location>
    <ligand>
        <name>[4Fe-4S] cluster</name>
        <dbReference type="ChEBI" id="CHEBI:49883"/>
        <label>1</label>
    </ligand>
</feature>
<feature type="binding site" evidence="1">
    <location>
        <position position="82"/>
    </location>
    <ligand>
        <name>[4Fe-4S] cluster</name>
        <dbReference type="ChEBI" id="CHEBI:49883"/>
        <label>1</label>
    </ligand>
</feature>
<feature type="binding site" evidence="1">
    <location>
        <position position="150"/>
    </location>
    <ligand>
        <name>[4Fe-4S] cluster</name>
        <dbReference type="ChEBI" id="CHEBI:49883"/>
        <label>2</label>
        <note>4Fe-4S-S-AdoMet</note>
    </ligand>
</feature>
<feature type="binding site" evidence="1">
    <location>
        <position position="154"/>
    </location>
    <ligand>
        <name>[4Fe-4S] cluster</name>
        <dbReference type="ChEBI" id="CHEBI:49883"/>
        <label>2</label>
        <note>4Fe-4S-S-AdoMet</note>
    </ligand>
</feature>
<feature type="binding site" evidence="1">
    <location>
        <position position="157"/>
    </location>
    <ligand>
        <name>[4Fe-4S] cluster</name>
        <dbReference type="ChEBI" id="CHEBI:49883"/>
        <label>2</label>
        <note>4Fe-4S-S-AdoMet</note>
    </ligand>
</feature>
<reference key="1">
    <citation type="journal article" date="2011" name="J. Bacteriol.">
        <title>Comparative genomics of 28 Salmonella enterica isolates: evidence for CRISPR-mediated adaptive sublineage evolution.</title>
        <authorList>
            <person name="Fricke W.F."/>
            <person name="Mammel M.K."/>
            <person name="McDermott P.F."/>
            <person name="Tartera C."/>
            <person name="White D.G."/>
            <person name="Leclerc J.E."/>
            <person name="Ravel J."/>
            <person name="Cebula T.A."/>
        </authorList>
    </citation>
    <scope>NUCLEOTIDE SEQUENCE [LARGE SCALE GENOMIC DNA]</scope>
    <source>
        <strain>CVM19633</strain>
    </source>
</reference>
<sequence length="441" mass="49597">MSNVTHQPKIGFVSLGCPKNLVDSERILTELRTEGYDVVPRYDDADMVIVNTCGFIDSAVQESLEAIGEALNENGKVIVTGCLGAKEDQIREVHPKVLEITGPHSYEQVLQHVHHYVPKPKHNPFLSLVPEQGVKLTPRHYAYLKISEGCNHRCTFCIIPSMRGDLVSRPIGDVLSEAKRLVDAGVKEILVISQDTSAYGVDVKHRTGFHNGEPVKTSMVSLCEQLSKLGVWTRLHYVYPYPHVDDVIPLMAEGKILPYLDIPLQHASPRILKLMKRPGSVDRQLARIKQWREICPELTLRSTFIVGFPGETEEDFQMLLDFLKEARLDRVGCFKYSPVEGAGANELPDQVPEEVKEERWNRFMQLQQQISAERLQEKVGREILVIVDEVDEEGAIGRSMADAPEIDGAVYLNGETNVKPGDIVRVKVENADEYDLWGSRV</sequence>
<evidence type="ECO:0000255" key="1">
    <source>
        <dbReference type="HAMAP-Rule" id="MF_01865"/>
    </source>
</evidence>
<evidence type="ECO:0000255" key="2">
    <source>
        <dbReference type="PROSITE-ProRule" id="PRU01266"/>
    </source>
</evidence>
<protein>
    <recommendedName>
        <fullName evidence="1">Ribosomal protein uS12 methylthiotransferase RimO</fullName>
        <shortName evidence="1">uS12 MTTase</shortName>
        <shortName evidence="1">uS12 methylthiotransferase</shortName>
        <ecNumber evidence="1">2.8.4.4</ecNumber>
    </recommendedName>
    <alternativeName>
        <fullName evidence="1">Ribosomal protein uS12 (aspartate-C(3))-methylthiotransferase</fullName>
    </alternativeName>
    <alternativeName>
        <fullName evidence="1">Ribosome maturation factor RimO</fullName>
    </alternativeName>
</protein>
<keyword id="KW-0004">4Fe-4S</keyword>
<keyword id="KW-0963">Cytoplasm</keyword>
<keyword id="KW-0408">Iron</keyword>
<keyword id="KW-0411">Iron-sulfur</keyword>
<keyword id="KW-0479">Metal-binding</keyword>
<keyword id="KW-0949">S-adenosyl-L-methionine</keyword>
<keyword id="KW-0808">Transferase</keyword>